<accession>Q4ZZ68</accession>
<keyword id="KW-0963">Cytoplasm</keyword>
<keyword id="KW-0378">Hydrolase</keyword>
<keyword id="KW-0540">Nuclease</keyword>
<keyword id="KW-0690">Ribosome biogenesis</keyword>
<proteinExistence type="inferred from homology"/>
<protein>
    <recommendedName>
        <fullName evidence="1">Putative pre-16S rRNA nuclease</fullName>
        <ecNumber evidence="1">3.1.-.-</ecNumber>
    </recommendedName>
</protein>
<dbReference type="EC" id="3.1.-.-" evidence="1"/>
<dbReference type="EMBL" id="CP000075">
    <property type="protein sequence ID" value="AAY35554.1"/>
    <property type="molecule type" value="Genomic_DNA"/>
</dbReference>
<dbReference type="RefSeq" id="YP_233592.1">
    <property type="nucleotide sequence ID" value="NC_007005.1"/>
</dbReference>
<dbReference type="SMR" id="Q4ZZ68"/>
<dbReference type="STRING" id="205918.Psyr_0484"/>
<dbReference type="KEGG" id="psb:Psyr_0484"/>
<dbReference type="PATRIC" id="fig|205918.7.peg.503"/>
<dbReference type="eggNOG" id="COG0816">
    <property type="taxonomic scope" value="Bacteria"/>
</dbReference>
<dbReference type="HOGENOM" id="CLU_098240_3_0_6"/>
<dbReference type="OrthoDB" id="9796140at2"/>
<dbReference type="Proteomes" id="UP000000426">
    <property type="component" value="Chromosome"/>
</dbReference>
<dbReference type="GO" id="GO:0005829">
    <property type="term" value="C:cytosol"/>
    <property type="evidence" value="ECO:0007669"/>
    <property type="project" value="TreeGrafter"/>
</dbReference>
<dbReference type="GO" id="GO:0004518">
    <property type="term" value="F:nuclease activity"/>
    <property type="evidence" value="ECO:0007669"/>
    <property type="project" value="UniProtKB-KW"/>
</dbReference>
<dbReference type="GO" id="GO:0000967">
    <property type="term" value="P:rRNA 5'-end processing"/>
    <property type="evidence" value="ECO:0007669"/>
    <property type="project" value="UniProtKB-UniRule"/>
</dbReference>
<dbReference type="CDD" id="cd16964">
    <property type="entry name" value="YqgF"/>
    <property type="match status" value="1"/>
</dbReference>
<dbReference type="Gene3D" id="3.30.420.140">
    <property type="entry name" value="YqgF/RNase H-like domain"/>
    <property type="match status" value="1"/>
</dbReference>
<dbReference type="HAMAP" id="MF_00651">
    <property type="entry name" value="Nuclease_YqgF"/>
    <property type="match status" value="1"/>
</dbReference>
<dbReference type="InterPro" id="IPR012337">
    <property type="entry name" value="RNaseH-like_sf"/>
</dbReference>
<dbReference type="InterPro" id="IPR005227">
    <property type="entry name" value="YqgF"/>
</dbReference>
<dbReference type="InterPro" id="IPR006641">
    <property type="entry name" value="YqgF/RNaseH-like_dom"/>
</dbReference>
<dbReference type="InterPro" id="IPR037027">
    <property type="entry name" value="YqgF/RNaseH-like_dom_sf"/>
</dbReference>
<dbReference type="NCBIfam" id="TIGR00250">
    <property type="entry name" value="RNAse_H_YqgF"/>
    <property type="match status" value="1"/>
</dbReference>
<dbReference type="PANTHER" id="PTHR33317">
    <property type="entry name" value="POLYNUCLEOTIDYL TRANSFERASE, RIBONUCLEASE H-LIKE SUPERFAMILY PROTEIN"/>
    <property type="match status" value="1"/>
</dbReference>
<dbReference type="PANTHER" id="PTHR33317:SF4">
    <property type="entry name" value="POLYNUCLEOTIDYL TRANSFERASE, RIBONUCLEASE H-LIKE SUPERFAMILY PROTEIN"/>
    <property type="match status" value="1"/>
</dbReference>
<dbReference type="Pfam" id="PF03652">
    <property type="entry name" value="RuvX"/>
    <property type="match status" value="1"/>
</dbReference>
<dbReference type="SMART" id="SM00732">
    <property type="entry name" value="YqgFc"/>
    <property type="match status" value="1"/>
</dbReference>
<dbReference type="SUPFAM" id="SSF53098">
    <property type="entry name" value="Ribonuclease H-like"/>
    <property type="match status" value="1"/>
</dbReference>
<gene>
    <name type="ordered locus">Psyr_0484</name>
</gene>
<name>YQGF_PSEU2</name>
<organism>
    <name type="scientific">Pseudomonas syringae pv. syringae (strain B728a)</name>
    <dbReference type="NCBI Taxonomy" id="205918"/>
    <lineage>
        <taxon>Bacteria</taxon>
        <taxon>Pseudomonadati</taxon>
        <taxon>Pseudomonadota</taxon>
        <taxon>Gammaproteobacteria</taxon>
        <taxon>Pseudomonadales</taxon>
        <taxon>Pseudomonadaceae</taxon>
        <taxon>Pseudomonas</taxon>
        <taxon>Pseudomonas syringae</taxon>
    </lineage>
</organism>
<evidence type="ECO:0000255" key="1">
    <source>
        <dbReference type="HAMAP-Rule" id="MF_00651"/>
    </source>
</evidence>
<reference key="1">
    <citation type="journal article" date="2005" name="Proc. Natl. Acad. Sci. U.S.A.">
        <title>Comparison of the complete genome sequences of Pseudomonas syringae pv. syringae B728a and pv. tomato DC3000.</title>
        <authorList>
            <person name="Feil H."/>
            <person name="Feil W.S."/>
            <person name="Chain P."/>
            <person name="Larimer F."/>
            <person name="Dibartolo G."/>
            <person name="Copeland A."/>
            <person name="Lykidis A."/>
            <person name="Trong S."/>
            <person name="Nolan M."/>
            <person name="Goltsman E."/>
            <person name="Thiel J."/>
            <person name="Malfatti S."/>
            <person name="Loper J.E."/>
            <person name="Lapidus A."/>
            <person name="Detter J.C."/>
            <person name="Land M."/>
            <person name="Richardson P.M."/>
            <person name="Kyrpides N.C."/>
            <person name="Ivanova N."/>
            <person name="Lindow S.E."/>
        </authorList>
    </citation>
    <scope>NUCLEOTIDE SEQUENCE [LARGE SCALE GENOMIC DNA]</scope>
    <source>
        <strain>B728a</strain>
    </source>
</reference>
<comment type="function">
    <text evidence="1">Could be a nuclease involved in processing of the 5'-end of pre-16S rRNA.</text>
</comment>
<comment type="subcellular location">
    <subcellularLocation>
        <location evidence="1">Cytoplasm</location>
    </subcellularLocation>
</comment>
<comment type="similarity">
    <text evidence="1">Belongs to the YqgF nuclease family.</text>
</comment>
<feature type="chain" id="PRO_0000257568" description="Putative pre-16S rRNA nuclease">
    <location>
        <begin position="1"/>
        <end position="146"/>
    </location>
</feature>
<sequence length="146" mass="15933">MAALRLLLGIDYGTKQIGVAVGQAITGQARELCTLKAQNGVPDWDKVQALINEWKPDAIVVGLPLNMDGTPSDMSARAEKFSRKLNGRFGVTVYTHDERLTTFEAKGERMARGGQKGSYRDNPVDAIAAALLLQGWLDEHPELLNV</sequence>